<evidence type="ECO:0000255" key="1">
    <source>
        <dbReference type="HAMAP-Rule" id="MF_01220"/>
    </source>
</evidence>
<name>PYRH_STAAB</name>
<proteinExistence type="inferred from homology"/>
<dbReference type="EC" id="2.7.4.22" evidence="1"/>
<dbReference type="EMBL" id="AJ938182">
    <property type="protein sequence ID" value="CAI80809.1"/>
    <property type="molecule type" value="Genomic_DNA"/>
</dbReference>
<dbReference type="RefSeq" id="WP_000057330.1">
    <property type="nucleotide sequence ID" value="NC_007622.1"/>
</dbReference>
<dbReference type="SMR" id="Q2YXL0"/>
<dbReference type="GeneID" id="98345574"/>
<dbReference type="KEGG" id="sab:SAB1120"/>
<dbReference type="HOGENOM" id="CLU_033861_0_0_9"/>
<dbReference type="UniPathway" id="UPA00159">
    <property type="reaction ID" value="UER00275"/>
</dbReference>
<dbReference type="GO" id="GO:0005737">
    <property type="term" value="C:cytoplasm"/>
    <property type="evidence" value="ECO:0007669"/>
    <property type="project" value="UniProtKB-SubCell"/>
</dbReference>
<dbReference type="GO" id="GO:0005524">
    <property type="term" value="F:ATP binding"/>
    <property type="evidence" value="ECO:0007669"/>
    <property type="project" value="UniProtKB-KW"/>
</dbReference>
<dbReference type="GO" id="GO:0033862">
    <property type="term" value="F:UMP kinase activity"/>
    <property type="evidence" value="ECO:0007669"/>
    <property type="project" value="UniProtKB-EC"/>
</dbReference>
<dbReference type="GO" id="GO:0044210">
    <property type="term" value="P:'de novo' CTP biosynthetic process"/>
    <property type="evidence" value="ECO:0007669"/>
    <property type="project" value="UniProtKB-UniRule"/>
</dbReference>
<dbReference type="GO" id="GO:0006225">
    <property type="term" value="P:UDP biosynthetic process"/>
    <property type="evidence" value="ECO:0007669"/>
    <property type="project" value="TreeGrafter"/>
</dbReference>
<dbReference type="CDD" id="cd04254">
    <property type="entry name" value="AAK_UMPK-PyrH-Ec"/>
    <property type="match status" value="1"/>
</dbReference>
<dbReference type="FunFam" id="3.40.1160.10:FF:000001">
    <property type="entry name" value="Uridylate kinase"/>
    <property type="match status" value="1"/>
</dbReference>
<dbReference type="Gene3D" id="3.40.1160.10">
    <property type="entry name" value="Acetylglutamate kinase-like"/>
    <property type="match status" value="1"/>
</dbReference>
<dbReference type="HAMAP" id="MF_01220_B">
    <property type="entry name" value="PyrH_B"/>
    <property type="match status" value="1"/>
</dbReference>
<dbReference type="InterPro" id="IPR036393">
    <property type="entry name" value="AceGlu_kinase-like_sf"/>
</dbReference>
<dbReference type="InterPro" id="IPR001048">
    <property type="entry name" value="Asp/Glu/Uridylate_kinase"/>
</dbReference>
<dbReference type="InterPro" id="IPR011817">
    <property type="entry name" value="Uridylate_kinase"/>
</dbReference>
<dbReference type="InterPro" id="IPR015963">
    <property type="entry name" value="Uridylate_kinase_bac"/>
</dbReference>
<dbReference type="NCBIfam" id="TIGR02075">
    <property type="entry name" value="pyrH_bact"/>
    <property type="match status" value="1"/>
</dbReference>
<dbReference type="PANTHER" id="PTHR42833">
    <property type="entry name" value="URIDYLATE KINASE"/>
    <property type="match status" value="1"/>
</dbReference>
<dbReference type="PANTHER" id="PTHR42833:SF4">
    <property type="entry name" value="URIDYLATE KINASE PUMPKIN, CHLOROPLASTIC"/>
    <property type="match status" value="1"/>
</dbReference>
<dbReference type="Pfam" id="PF00696">
    <property type="entry name" value="AA_kinase"/>
    <property type="match status" value="1"/>
</dbReference>
<dbReference type="PIRSF" id="PIRSF005650">
    <property type="entry name" value="Uridylate_kin"/>
    <property type="match status" value="1"/>
</dbReference>
<dbReference type="SUPFAM" id="SSF53633">
    <property type="entry name" value="Carbamate kinase-like"/>
    <property type="match status" value="1"/>
</dbReference>
<reference key="1">
    <citation type="journal article" date="2007" name="PLoS ONE">
        <title>Molecular correlates of host specialization in Staphylococcus aureus.</title>
        <authorList>
            <person name="Herron-Olson L."/>
            <person name="Fitzgerald J.R."/>
            <person name="Musser J.M."/>
            <person name="Kapur V."/>
        </authorList>
    </citation>
    <scope>NUCLEOTIDE SEQUENCE [LARGE SCALE GENOMIC DNA]</scope>
    <source>
        <strain>bovine RF122 / ET3-1</strain>
    </source>
</reference>
<organism>
    <name type="scientific">Staphylococcus aureus (strain bovine RF122 / ET3-1)</name>
    <dbReference type="NCBI Taxonomy" id="273036"/>
    <lineage>
        <taxon>Bacteria</taxon>
        <taxon>Bacillati</taxon>
        <taxon>Bacillota</taxon>
        <taxon>Bacilli</taxon>
        <taxon>Bacillales</taxon>
        <taxon>Staphylococcaceae</taxon>
        <taxon>Staphylococcus</taxon>
    </lineage>
</organism>
<gene>
    <name evidence="1" type="primary">pyrH</name>
    <name type="ordered locus">SAB1120</name>
</gene>
<comment type="function">
    <text evidence="1">Catalyzes the reversible phosphorylation of UMP to UDP.</text>
</comment>
<comment type="catalytic activity">
    <reaction evidence="1">
        <text>UMP + ATP = UDP + ADP</text>
        <dbReference type="Rhea" id="RHEA:24400"/>
        <dbReference type="ChEBI" id="CHEBI:30616"/>
        <dbReference type="ChEBI" id="CHEBI:57865"/>
        <dbReference type="ChEBI" id="CHEBI:58223"/>
        <dbReference type="ChEBI" id="CHEBI:456216"/>
        <dbReference type="EC" id="2.7.4.22"/>
    </reaction>
</comment>
<comment type="activity regulation">
    <text evidence="1">Allosterically activated by GTP. Inhibited by UTP.</text>
</comment>
<comment type="pathway">
    <text evidence="1">Pyrimidine metabolism; CTP biosynthesis via de novo pathway; UDP from UMP (UMPK route): step 1/1.</text>
</comment>
<comment type="subunit">
    <text evidence="1">Homohexamer.</text>
</comment>
<comment type="subcellular location">
    <subcellularLocation>
        <location evidence="1">Cytoplasm</location>
    </subcellularLocation>
</comment>
<comment type="similarity">
    <text evidence="1">Belongs to the UMP kinase family.</text>
</comment>
<protein>
    <recommendedName>
        <fullName evidence="1">Uridylate kinase</fullName>
        <shortName evidence="1">UK</shortName>
        <ecNumber evidence="1">2.7.4.22</ecNumber>
    </recommendedName>
    <alternativeName>
        <fullName evidence="1">Uridine monophosphate kinase</fullName>
        <shortName evidence="1">UMP kinase</shortName>
        <shortName evidence="1">UMPK</shortName>
    </alternativeName>
</protein>
<sequence>MAQISKYKRVVLKLSGEALAGEKGFGINPVIIKSVAEQVAEVAKMDCEIAVIVGGGNIWRGKTGSDLGMDRGTADYMGMLATVMNALALQDSLEQLDCDTRVLTSIEMKQVAEPYIRRRAIRHLEKKRVVIFAAGIGNPYFSTDTTAALRAAEVEADVILMGKNNVDGVYSADPKVNKDAVKYEHLTHIQMLQEGLQVMDSTASSFCMDNNIPLTVFSIMEEGNIKRAVMGEKIGTLITK</sequence>
<keyword id="KW-0021">Allosteric enzyme</keyword>
<keyword id="KW-0067">ATP-binding</keyword>
<keyword id="KW-0963">Cytoplasm</keyword>
<keyword id="KW-0418">Kinase</keyword>
<keyword id="KW-0547">Nucleotide-binding</keyword>
<keyword id="KW-0665">Pyrimidine biosynthesis</keyword>
<keyword id="KW-0808">Transferase</keyword>
<feature type="chain" id="PRO_1000054026" description="Uridylate kinase">
    <location>
        <begin position="1"/>
        <end position="240"/>
    </location>
</feature>
<feature type="region of interest" description="Involved in allosteric activation by GTP" evidence="1">
    <location>
        <begin position="21"/>
        <end position="26"/>
    </location>
</feature>
<feature type="binding site" evidence="1">
    <location>
        <begin position="13"/>
        <end position="16"/>
    </location>
    <ligand>
        <name>ATP</name>
        <dbReference type="ChEBI" id="CHEBI:30616"/>
    </ligand>
</feature>
<feature type="binding site" evidence="1">
    <location>
        <position position="55"/>
    </location>
    <ligand>
        <name>UMP</name>
        <dbReference type="ChEBI" id="CHEBI:57865"/>
    </ligand>
</feature>
<feature type="binding site" evidence="1">
    <location>
        <position position="56"/>
    </location>
    <ligand>
        <name>ATP</name>
        <dbReference type="ChEBI" id="CHEBI:30616"/>
    </ligand>
</feature>
<feature type="binding site" evidence="1">
    <location>
        <position position="60"/>
    </location>
    <ligand>
        <name>ATP</name>
        <dbReference type="ChEBI" id="CHEBI:30616"/>
    </ligand>
</feature>
<feature type="binding site" evidence="1">
    <location>
        <position position="75"/>
    </location>
    <ligand>
        <name>UMP</name>
        <dbReference type="ChEBI" id="CHEBI:57865"/>
    </ligand>
</feature>
<feature type="binding site" evidence="1">
    <location>
        <begin position="136"/>
        <end position="143"/>
    </location>
    <ligand>
        <name>UMP</name>
        <dbReference type="ChEBI" id="CHEBI:57865"/>
    </ligand>
</feature>
<feature type="binding site" evidence="1">
    <location>
        <position position="164"/>
    </location>
    <ligand>
        <name>ATP</name>
        <dbReference type="ChEBI" id="CHEBI:30616"/>
    </ligand>
</feature>
<feature type="binding site" evidence="1">
    <location>
        <position position="170"/>
    </location>
    <ligand>
        <name>ATP</name>
        <dbReference type="ChEBI" id="CHEBI:30616"/>
    </ligand>
</feature>
<feature type="binding site" evidence="1">
    <location>
        <position position="173"/>
    </location>
    <ligand>
        <name>ATP</name>
        <dbReference type="ChEBI" id="CHEBI:30616"/>
    </ligand>
</feature>
<accession>Q2YXL0</accession>